<sequence length="326" mass="37212">MRDRLKDPVKIFEINKGKRPVHIAAPMVRYSKLPFRQLVRDYNTDIVYTPMILAKEFLHPKGRYFDFSTNDADASLILQFGVDDPVILEKAAQLVGPYVDGIGINCGCPQTWAIQEGIGSALLDEPEKVHKLVRAVKSTLGESFCTEVKIRIAKDLNKTRHLMQVIEKSGADIITVHGRTRQDRSSFPVNLDAIREVRPCVQIPVVANGDVKSLRKGLEIAKYTETQGIMSARGLLENPALFAGYEETPWGCVERFLWYSTSYSLNFHLFYHHLTTMMGQMTTKRERMTIPKDSFASVMDWLDEHFVVRRPDEPMFGESVLPCRRY</sequence>
<feature type="chain" id="PRO_0000316228" description="tRNA-dihydrouridine(20a/20b) synthase [NAD(P)+]">
    <location>
        <begin position="1"/>
        <end position="326"/>
    </location>
</feature>
<feature type="active site" description="Proton donor" evidence="2">
    <location>
        <position position="108"/>
    </location>
</feature>
<feature type="binding site" evidence="2">
    <location>
        <begin position="26"/>
        <end position="28"/>
    </location>
    <ligand>
        <name>FMN</name>
        <dbReference type="ChEBI" id="CHEBI:58210"/>
    </ligand>
</feature>
<feature type="binding site" evidence="2">
    <location>
        <position position="79"/>
    </location>
    <ligand>
        <name>FMN</name>
        <dbReference type="ChEBI" id="CHEBI:58210"/>
    </ligand>
</feature>
<feature type="binding site" evidence="2">
    <location>
        <position position="149"/>
    </location>
    <ligand>
        <name>FMN</name>
        <dbReference type="ChEBI" id="CHEBI:58210"/>
    </ligand>
</feature>
<feature type="binding site" evidence="2">
    <location>
        <position position="177"/>
    </location>
    <ligand>
        <name>FMN</name>
        <dbReference type="ChEBI" id="CHEBI:58210"/>
    </ligand>
</feature>
<feature type="binding site" evidence="2">
    <location>
        <begin position="208"/>
        <end position="210"/>
    </location>
    <ligand>
        <name>FMN</name>
        <dbReference type="ChEBI" id="CHEBI:58210"/>
    </ligand>
</feature>
<feature type="binding site" evidence="2">
    <location>
        <begin position="232"/>
        <end position="233"/>
    </location>
    <ligand>
        <name>FMN</name>
        <dbReference type="ChEBI" id="CHEBI:58210"/>
    </ligand>
</feature>
<comment type="function">
    <text evidence="4">Catalyzes the synthesis of dihydrouridine, a modified base found in the D-loop of most tRNAs (PubMed:34798057). Also able to mediate dihydrouridylation of some mRNAs, thereby affecting their translation (PubMed:34798057).</text>
</comment>
<comment type="catalytic activity">
    <reaction evidence="1">
        <text>5,6-dihydrouridine(20a) in tRNA + NADP(+) = uridine(20a) in tRNA + NADPH + H(+)</text>
        <dbReference type="Rhea" id="RHEA:53344"/>
        <dbReference type="Rhea" id="RHEA-COMP:13535"/>
        <dbReference type="Rhea" id="RHEA-COMP:13536"/>
        <dbReference type="ChEBI" id="CHEBI:15378"/>
        <dbReference type="ChEBI" id="CHEBI:57783"/>
        <dbReference type="ChEBI" id="CHEBI:58349"/>
        <dbReference type="ChEBI" id="CHEBI:65315"/>
        <dbReference type="ChEBI" id="CHEBI:74443"/>
        <dbReference type="EC" id="1.3.1.90"/>
    </reaction>
    <physiologicalReaction direction="right-to-left" evidence="1">
        <dbReference type="Rhea" id="RHEA:53346"/>
    </physiologicalReaction>
</comment>
<comment type="catalytic activity">
    <reaction evidence="1">
        <text>5,6-dihydrouridine(20a) in tRNA + NAD(+) = uridine(20a) in tRNA + NADH + H(+)</text>
        <dbReference type="Rhea" id="RHEA:53348"/>
        <dbReference type="Rhea" id="RHEA-COMP:13535"/>
        <dbReference type="Rhea" id="RHEA-COMP:13536"/>
        <dbReference type="ChEBI" id="CHEBI:15378"/>
        <dbReference type="ChEBI" id="CHEBI:57540"/>
        <dbReference type="ChEBI" id="CHEBI:57945"/>
        <dbReference type="ChEBI" id="CHEBI:65315"/>
        <dbReference type="ChEBI" id="CHEBI:74443"/>
        <dbReference type="EC" id="1.3.1.90"/>
    </reaction>
    <physiologicalReaction direction="right-to-left" evidence="1">
        <dbReference type="Rhea" id="RHEA:53350"/>
    </physiologicalReaction>
</comment>
<comment type="catalytic activity">
    <reaction evidence="1">
        <text>5,6-dihydrouridine(20b) in tRNA + NAD(+) = uridine(20b) in tRNA + NADH + H(+)</text>
        <dbReference type="Rhea" id="RHEA:53352"/>
        <dbReference type="Rhea" id="RHEA-COMP:13537"/>
        <dbReference type="Rhea" id="RHEA-COMP:13538"/>
        <dbReference type="ChEBI" id="CHEBI:15378"/>
        <dbReference type="ChEBI" id="CHEBI:57540"/>
        <dbReference type="ChEBI" id="CHEBI:57945"/>
        <dbReference type="ChEBI" id="CHEBI:65315"/>
        <dbReference type="ChEBI" id="CHEBI:74443"/>
        <dbReference type="EC" id="1.3.1.90"/>
    </reaction>
    <physiologicalReaction direction="right-to-left" evidence="1">
        <dbReference type="Rhea" id="RHEA:53354"/>
    </physiologicalReaction>
</comment>
<comment type="catalytic activity">
    <reaction evidence="1">
        <text>5,6-dihydrouridine(20b) in tRNA + NADP(+) = uridine(20b) in tRNA + NADPH + H(+)</text>
        <dbReference type="Rhea" id="RHEA:53356"/>
        <dbReference type="Rhea" id="RHEA-COMP:13537"/>
        <dbReference type="Rhea" id="RHEA-COMP:13538"/>
        <dbReference type="ChEBI" id="CHEBI:15378"/>
        <dbReference type="ChEBI" id="CHEBI:57783"/>
        <dbReference type="ChEBI" id="CHEBI:58349"/>
        <dbReference type="ChEBI" id="CHEBI:65315"/>
        <dbReference type="ChEBI" id="CHEBI:74443"/>
        <dbReference type="EC" id="1.3.1.90"/>
    </reaction>
    <physiologicalReaction direction="right-to-left" evidence="1">
        <dbReference type="Rhea" id="RHEA:53358"/>
    </physiologicalReaction>
</comment>
<comment type="catalytic activity">
    <reaction evidence="4">
        <text>a 5,6-dihydrouridine in mRNA + NAD(+) = a uridine in mRNA + NADH + H(+)</text>
        <dbReference type="Rhea" id="RHEA:69851"/>
        <dbReference type="Rhea" id="RHEA-COMP:14658"/>
        <dbReference type="Rhea" id="RHEA-COMP:17789"/>
        <dbReference type="ChEBI" id="CHEBI:15378"/>
        <dbReference type="ChEBI" id="CHEBI:57540"/>
        <dbReference type="ChEBI" id="CHEBI:57945"/>
        <dbReference type="ChEBI" id="CHEBI:65315"/>
        <dbReference type="ChEBI" id="CHEBI:74443"/>
    </reaction>
    <physiologicalReaction direction="right-to-left" evidence="4">
        <dbReference type="Rhea" id="RHEA:69853"/>
    </physiologicalReaction>
</comment>
<comment type="catalytic activity">
    <reaction evidence="4">
        <text>a 5,6-dihydrouridine in mRNA + NADP(+) = a uridine in mRNA + NADPH + H(+)</text>
        <dbReference type="Rhea" id="RHEA:69855"/>
        <dbReference type="Rhea" id="RHEA-COMP:14658"/>
        <dbReference type="Rhea" id="RHEA-COMP:17789"/>
        <dbReference type="ChEBI" id="CHEBI:15378"/>
        <dbReference type="ChEBI" id="CHEBI:57783"/>
        <dbReference type="ChEBI" id="CHEBI:58349"/>
        <dbReference type="ChEBI" id="CHEBI:65315"/>
        <dbReference type="ChEBI" id="CHEBI:74443"/>
    </reaction>
    <physiologicalReaction direction="right-to-left" evidence="4">
        <dbReference type="Rhea" id="RHEA:69857"/>
    </physiologicalReaction>
</comment>
<comment type="cofactor">
    <cofactor evidence="2">
        <name>FMN</name>
        <dbReference type="ChEBI" id="CHEBI:58210"/>
    </cofactor>
</comment>
<comment type="subcellular location">
    <subcellularLocation>
        <location evidence="3">Mitochondrion</location>
    </subcellularLocation>
</comment>
<comment type="similarity">
    <text evidence="6">Belongs to the Dus family. Dus4 subfamily.</text>
</comment>
<evidence type="ECO:0000250" key="1">
    <source>
        <dbReference type="UniProtKB" id="Q06063"/>
    </source>
</evidence>
<evidence type="ECO:0000250" key="2">
    <source>
        <dbReference type="UniProtKB" id="Q5SMC7"/>
    </source>
</evidence>
<evidence type="ECO:0000269" key="3">
    <source>
    </source>
</evidence>
<evidence type="ECO:0000269" key="4">
    <source>
    </source>
</evidence>
<evidence type="ECO:0000303" key="5">
    <source>
    </source>
</evidence>
<evidence type="ECO:0000305" key="6"/>
<evidence type="ECO:0000312" key="7">
    <source>
        <dbReference type="PomBase" id="SPCC777.15"/>
    </source>
</evidence>
<name>DUS4_SCHPO</name>
<protein>
    <recommendedName>
        <fullName>tRNA-dihydrouridine(20a/20b) synthase [NAD(P)+]</fullName>
        <ecNumber evidence="1">1.3.1.90</ecNumber>
    </recommendedName>
    <alternativeName>
        <fullName evidence="6">mRNA-dihydrouridine synthase dus4</fullName>
        <ecNumber evidence="4">1.3.1.-</ecNumber>
    </alternativeName>
    <alternativeName>
        <fullName>tRNA-dihydrouridine synthase 4</fullName>
    </alternativeName>
</protein>
<gene>
    <name evidence="5 7" type="primary">dus4</name>
    <name type="ORF">SPCC777.15</name>
</gene>
<keyword id="KW-0285">Flavoprotein</keyword>
<keyword id="KW-0288">FMN</keyword>
<keyword id="KW-0496">Mitochondrion</keyword>
<keyword id="KW-0507">mRNA processing</keyword>
<keyword id="KW-0520">NAD</keyword>
<keyword id="KW-0521">NADP</keyword>
<keyword id="KW-0560">Oxidoreductase</keyword>
<keyword id="KW-1185">Reference proteome</keyword>
<keyword id="KW-0819">tRNA processing</keyword>
<proteinExistence type="evidence at protein level"/>
<organism>
    <name type="scientific">Schizosaccharomyces pombe (strain 972 / ATCC 24843)</name>
    <name type="common">Fission yeast</name>
    <dbReference type="NCBI Taxonomy" id="284812"/>
    <lineage>
        <taxon>Eukaryota</taxon>
        <taxon>Fungi</taxon>
        <taxon>Dikarya</taxon>
        <taxon>Ascomycota</taxon>
        <taxon>Taphrinomycotina</taxon>
        <taxon>Schizosaccharomycetes</taxon>
        <taxon>Schizosaccharomycetales</taxon>
        <taxon>Schizosaccharomycetaceae</taxon>
        <taxon>Schizosaccharomyces</taxon>
    </lineage>
</organism>
<accession>O74553</accession>
<reference key="1">
    <citation type="journal article" date="2002" name="Nature">
        <title>The genome sequence of Schizosaccharomyces pombe.</title>
        <authorList>
            <person name="Wood V."/>
            <person name="Gwilliam R."/>
            <person name="Rajandream M.A."/>
            <person name="Lyne M.H."/>
            <person name="Lyne R."/>
            <person name="Stewart A."/>
            <person name="Sgouros J.G."/>
            <person name="Peat N."/>
            <person name="Hayles J."/>
            <person name="Baker S.G."/>
            <person name="Basham D."/>
            <person name="Bowman S."/>
            <person name="Brooks K."/>
            <person name="Brown D."/>
            <person name="Brown S."/>
            <person name="Chillingworth T."/>
            <person name="Churcher C.M."/>
            <person name="Collins M."/>
            <person name="Connor R."/>
            <person name="Cronin A."/>
            <person name="Davis P."/>
            <person name="Feltwell T."/>
            <person name="Fraser A."/>
            <person name="Gentles S."/>
            <person name="Goble A."/>
            <person name="Hamlin N."/>
            <person name="Harris D.E."/>
            <person name="Hidalgo J."/>
            <person name="Hodgson G."/>
            <person name="Holroyd S."/>
            <person name="Hornsby T."/>
            <person name="Howarth S."/>
            <person name="Huckle E.J."/>
            <person name="Hunt S."/>
            <person name="Jagels K."/>
            <person name="James K.D."/>
            <person name="Jones L."/>
            <person name="Jones M."/>
            <person name="Leather S."/>
            <person name="McDonald S."/>
            <person name="McLean J."/>
            <person name="Mooney P."/>
            <person name="Moule S."/>
            <person name="Mungall K.L."/>
            <person name="Murphy L.D."/>
            <person name="Niblett D."/>
            <person name="Odell C."/>
            <person name="Oliver K."/>
            <person name="O'Neil S."/>
            <person name="Pearson D."/>
            <person name="Quail M.A."/>
            <person name="Rabbinowitsch E."/>
            <person name="Rutherford K.M."/>
            <person name="Rutter S."/>
            <person name="Saunders D."/>
            <person name="Seeger K."/>
            <person name="Sharp S."/>
            <person name="Skelton J."/>
            <person name="Simmonds M.N."/>
            <person name="Squares R."/>
            <person name="Squares S."/>
            <person name="Stevens K."/>
            <person name="Taylor K."/>
            <person name="Taylor R.G."/>
            <person name="Tivey A."/>
            <person name="Walsh S.V."/>
            <person name="Warren T."/>
            <person name="Whitehead S."/>
            <person name="Woodward J.R."/>
            <person name="Volckaert G."/>
            <person name="Aert R."/>
            <person name="Robben J."/>
            <person name="Grymonprez B."/>
            <person name="Weltjens I."/>
            <person name="Vanstreels E."/>
            <person name="Rieger M."/>
            <person name="Schaefer M."/>
            <person name="Mueller-Auer S."/>
            <person name="Gabel C."/>
            <person name="Fuchs M."/>
            <person name="Duesterhoeft A."/>
            <person name="Fritzc C."/>
            <person name="Holzer E."/>
            <person name="Moestl D."/>
            <person name="Hilbert H."/>
            <person name="Borzym K."/>
            <person name="Langer I."/>
            <person name="Beck A."/>
            <person name="Lehrach H."/>
            <person name="Reinhardt R."/>
            <person name="Pohl T.M."/>
            <person name="Eger P."/>
            <person name="Zimmermann W."/>
            <person name="Wedler H."/>
            <person name="Wambutt R."/>
            <person name="Purnelle B."/>
            <person name="Goffeau A."/>
            <person name="Cadieu E."/>
            <person name="Dreano S."/>
            <person name="Gloux S."/>
            <person name="Lelaure V."/>
            <person name="Mottier S."/>
            <person name="Galibert F."/>
            <person name="Aves S.J."/>
            <person name="Xiang Z."/>
            <person name="Hunt C."/>
            <person name="Moore K."/>
            <person name="Hurst S.M."/>
            <person name="Lucas M."/>
            <person name="Rochet M."/>
            <person name="Gaillardin C."/>
            <person name="Tallada V.A."/>
            <person name="Garzon A."/>
            <person name="Thode G."/>
            <person name="Daga R.R."/>
            <person name="Cruzado L."/>
            <person name="Jimenez J."/>
            <person name="Sanchez M."/>
            <person name="del Rey F."/>
            <person name="Benito J."/>
            <person name="Dominguez A."/>
            <person name="Revuelta J.L."/>
            <person name="Moreno S."/>
            <person name="Armstrong J."/>
            <person name="Forsburg S.L."/>
            <person name="Cerutti L."/>
            <person name="Lowe T."/>
            <person name="McCombie W.R."/>
            <person name="Paulsen I."/>
            <person name="Potashkin J."/>
            <person name="Shpakovski G.V."/>
            <person name="Ussery D."/>
            <person name="Barrell B.G."/>
            <person name="Nurse P."/>
        </authorList>
    </citation>
    <scope>NUCLEOTIDE SEQUENCE [LARGE SCALE GENOMIC DNA]</scope>
    <source>
        <strain>972 / ATCC 24843</strain>
    </source>
</reference>
<reference key="2">
    <citation type="journal article" date="2006" name="Nat. Biotechnol.">
        <title>ORFeome cloning and global analysis of protein localization in the fission yeast Schizosaccharomyces pombe.</title>
        <authorList>
            <person name="Matsuyama A."/>
            <person name="Arai R."/>
            <person name="Yashiroda Y."/>
            <person name="Shirai A."/>
            <person name="Kamata A."/>
            <person name="Sekido S."/>
            <person name="Kobayashi Y."/>
            <person name="Hashimoto A."/>
            <person name="Hamamoto M."/>
            <person name="Hiraoka Y."/>
            <person name="Horinouchi S."/>
            <person name="Yoshida M."/>
        </authorList>
    </citation>
    <scope>SUBCELLULAR LOCATION [LARGE SCALE ANALYSIS]</scope>
</reference>
<reference key="3">
    <citation type="journal article" date="2021" name="Mol. Cell">
        <title>Transcription-wide mapping of dihydrouridine reveals that mRNA dihydrouridylation is required for meiotic chromosome segregation.</title>
        <authorList>
            <person name="Finet O."/>
            <person name="Yague-Sanz C."/>
            <person name="Krueger L.K."/>
            <person name="Tran P."/>
            <person name="Migeot V."/>
            <person name="Louski M."/>
            <person name="Nevers A."/>
            <person name="Rougemaille M."/>
            <person name="Sun J."/>
            <person name="Ernst F.G.M."/>
            <person name="Wacheul L."/>
            <person name="Wery M."/>
            <person name="Morillon A."/>
            <person name="Dedon P."/>
            <person name="Lafontaine D.L.J."/>
            <person name="Hermand D."/>
        </authorList>
    </citation>
    <scope>FUNCTION</scope>
    <scope>CATALYTIC ACTIVITY</scope>
</reference>
<dbReference type="EC" id="1.3.1.90" evidence="1"/>
<dbReference type="EC" id="1.3.1.-" evidence="4"/>
<dbReference type="EMBL" id="CU329672">
    <property type="protein sequence ID" value="CAA20719.1"/>
    <property type="molecule type" value="Genomic_DNA"/>
</dbReference>
<dbReference type="PIR" id="T11721">
    <property type="entry name" value="T11721"/>
</dbReference>
<dbReference type="RefSeq" id="NP_588262.1">
    <property type="nucleotide sequence ID" value="NM_001023252.2"/>
</dbReference>
<dbReference type="SMR" id="O74553"/>
<dbReference type="BioGRID" id="275570">
    <property type="interactions" value="2"/>
</dbReference>
<dbReference type="FunCoup" id="O74553">
    <property type="interactions" value="106"/>
</dbReference>
<dbReference type="STRING" id="284812.O74553"/>
<dbReference type="PaxDb" id="4896-SPCC777.15.1"/>
<dbReference type="EnsemblFungi" id="SPCC777.15.1">
    <property type="protein sequence ID" value="SPCC777.15.1:pep"/>
    <property type="gene ID" value="SPCC777.15"/>
</dbReference>
<dbReference type="GeneID" id="2538996"/>
<dbReference type="KEGG" id="spo:2538996"/>
<dbReference type="PomBase" id="SPCC777.15">
    <property type="gene designation" value="dus4"/>
</dbReference>
<dbReference type="VEuPathDB" id="FungiDB:SPCC777.15"/>
<dbReference type="eggNOG" id="KOG2335">
    <property type="taxonomic scope" value="Eukaryota"/>
</dbReference>
<dbReference type="HOGENOM" id="CLU_013299_4_0_1"/>
<dbReference type="InParanoid" id="O74553"/>
<dbReference type="OMA" id="QRPHHDI"/>
<dbReference type="PhylomeDB" id="O74553"/>
<dbReference type="PRO" id="PR:O74553"/>
<dbReference type="Proteomes" id="UP000002485">
    <property type="component" value="Chromosome III"/>
</dbReference>
<dbReference type="GO" id="GO:0005739">
    <property type="term" value="C:mitochondrion"/>
    <property type="evidence" value="ECO:0007005"/>
    <property type="project" value="PomBase"/>
</dbReference>
<dbReference type="GO" id="GO:0050660">
    <property type="term" value="F:flavin adenine dinucleotide binding"/>
    <property type="evidence" value="ECO:0007669"/>
    <property type="project" value="InterPro"/>
</dbReference>
<dbReference type="GO" id="GO:0106414">
    <property type="term" value="F:mRNA dihydrouridine synthase activity"/>
    <property type="evidence" value="ECO:0007669"/>
    <property type="project" value="RHEA"/>
</dbReference>
<dbReference type="GO" id="GO:0017150">
    <property type="term" value="F:tRNA dihydrouridine synthase activity"/>
    <property type="evidence" value="ECO:0000318"/>
    <property type="project" value="GO_Central"/>
</dbReference>
<dbReference type="GO" id="GO:0102266">
    <property type="term" value="F:tRNA-dihydrouridine20a synthase activity"/>
    <property type="evidence" value="ECO:0000269"/>
    <property type="project" value="PomBase"/>
</dbReference>
<dbReference type="GO" id="GO:0102267">
    <property type="term" value="F:tRNA-dihydrouridine20b synthase activity"/>
    <property type="evidence" value="ECO:0000269"/>
    <property type="project" value="PomBase"/>
</dbReference>
<dbReference type="GO" id="GO:0006397">
    <property type="term" value="P:mRNA processing"/>
    <property type="evidence" value="ECO:0007669"/>
    <property type="project" value="UniProtKB-KW"/>
</dbReference>
<dbReference type="CDD" id="cd02801">
    <property type="entry name" value="DUS_like_FMN"/>
    <property type="match status" value="1"/>
</dbReference>
<dbReference type="FunFam" id="3.20.20.70:FF:000159">
    <property type="entry name" value="tRNA-dihydrouridine synthase 4"/>
    <property type="match status" value="1"/>
</dbReference>
<dbReference type="Gene3D" id="3.20.20.70">
    <property type="entry name" value="Aldolase class I"/>
    <property type="match status" value="1"/>
</dbReference>
<dbReference type="InterPro" id="IPR013785">
    <property type="entry name" value="Aldolase_TIM"/>
</dbReference>
<dbReference type="InterPro" id="IPR035587">
    <property type="entry name" value="DUS-like_FMN-bd"/>
</dbReference>
<dbReference type="InterPro" id="IPR001269">
    <property type="entry name" value="DUS_fam"/>
</dbReference>
<dbReference type="InterPro" id="IPR018517">
    <property type="entry name" value="tRNA_hU_synthase_CS"/>
</dbReference>
<dbReference type="PANTHER" id="PTHR11082">
    <property type="entry name" value="TRNA-DIHYDROURIDINE SYNTHASE"/>
    <property type="match status" value="1"/>
</dbReference>
<dbReference type="PANTHER" id="PTHR11082:SF31">
    <property type="entry name" value="TRNA-DIHYDROURIDINE(20A_20B) SYNTHASE [NAD(P)+]-LIKE"/>
    <property type="match status" value="1"/>
</dbReference>
<dbReference type="Pfam" id="PF01207">
    <property type="entry name" value="Dus"/>
    <property type="match status" value="1"/>
</dbReference>
<dbReference type="PIRSF" id="PIRSF006621">
    <property type="entry name" value="Dus"/>
    <property type="match status" value="1"/>
</dbReference>
<dbReference type="SUPFAM" id="SSF51395">
    <property type="entry name" value="FMN-linked oxidoreductases"/>
    <property type="match status" value="1"/>
</dbReference>
<dbReference type="PROSITE" id="PS01136">
    <property type="entry name" value="UPF0034"/>
    <property type="match status" value="1"/>
</dbReference>